<gene>
    <name evidence="1" type="primary">recB</name>
    <name type="ordered locus">bbp_404</name>
</gene>
<comment type="function">
    <text evidence="1">A helicase/nuclease that prepares dsDNA breaks (DSB) for recombinational DNA repair. Binds to DSBs and unwinds DNA via a highly rapid and processive ATP-dependent bidirectional helicase activity. Unwinds dsDNA until it encounters a Chi (crossover hotspot instigator) sequence from the 3' direction. Cuts ssDNA a few nucleotides 3' to the Chi site. The properties and activities of the enzyme are changed at Chi. The Chi-altered holoenzyme produces a long 3'-ssDNA overhang and facilitates RecA-binding to the ssDNA for homologous DNA recombination and repair. Holoenzyme degrades any linearized DNA that is unable to undergo homologous recombination. In the holoenzyme this subunit contributes ATPase, 3'-5' helicase, exonuclease activity and loads RecA onto ssDNA.</text>
</comment>
<comment type="catalytic activity">
    <reaction evidence="1">
        <text>Exonucleolytic cleavage (in the presence of ATP) in either 5'- to 3'- or 3'- to 5'-direction to yield 5'-phosphooligonucleotides.</text>
        <dbReference type="EC" id="3.1.11.5"/>
    </reaction>
</comment>
<comment type="catalytic activity">
    <reaction evidence="1">
        <text>Couples ATP hydrolysis with the unwinding of duplex DNA by translocating in the 3'-5' direction.</text>
        <dbReference type="EC" id="5.6.2.4"/>
    </reaction>
</comment>
<comment type="catalytic activity">
    <reaction evidence="1">
        <text>ATP + H2O = ADP + phosphate + H(+)</text>
        <dbReference type="Rhea" id="RHEA:13065"/>
        <dbReference type="ChEBI" id="CHEBI:15377"/>
        <dbReference type="ChEBI" id="CHEBI:15378"/>
        <dbReference type="ChEBI" id="CHEBI:30616"/>
        <dbReference type="ChEBI" id="CHEBI:43474"/>
        <dbReference type="ChEBI" id="CHEBI:456216"/>
        <dbReference type="EC" id="5.6.2.4"/>
    </reaction>
</comment>
<comment type="cofactor">
    <cofactor evidence="1">
        <name>Mg(2+)</name>
        <dbReference type="ChEBI" id="CHEBI:18420"/>
    </cofactor>
    <text evidence="1">Binds 1 Mg(2+) ion per subunit.</text>
</comment>
<comment type="subunit">
    <text evidence="1">Heterotrimer of RecB, RecC and RecD. All subunits contribute to DNA-binding. Interacts with RecA.</text>
</comment>
<comment type="domain">
    <text evidence="1">The N-terminal DNA-binding domain is a ssDNA-dependent ATPase and has ATP-dependent 3'-5' helicase function. This domain interacts with RecC.</text>
</comment>
<comment type="domain">
    <text evidence="1">The C-terminal domain has nuclease activity and interacts with RecD. It interacts with RecA, facilitating its loading onto ssDNA.</text>
</comment>
<comment type="miscellaneous">
    <text evidence="1">In the RecBCD complex, RecB has a slow 3'-5' helicase, an exonuclease activity and loads RecA onto ssDNA, RecD has a fast 5'-3' helicase activity, while RecC stimulates the ATPase and processivity of the RecB helicase and contributes to recognition of the Chi site.</text>
</comment>
<comment type="similarity">
    <text evidence="1">Belongs to the helicase family. UvrD subfamily.</text>
</comment>
<reference key="1">
    <citation type="journal article" date="2003" name="Proc. Natl. Acad. Sci. U.S.A.">
        <title>Reductive genome evolution in Buchnera aphidicola.</title>
        <authorList>
            <person name="van Ham R.C.H.J."/>
            <person name="Kamerbeek J."/>
            <person name="Palacios C."/>
            <person name="Rausell C."/>
            <person name="Abascal F."/>
            <person name="Bastolla U."/>
            <person name="Fernandez J.M."/>
            <person name="Jimenez L."/>
            <person name="Postigo M."/>
            <person name="Silva F.J."/>
            <person name="Tamames J."/>
            <person name="Viguera E."/>
            <person name="Latorre A."/>
            <person name="Valencia A."/>
            <person name="Moran F."/>
            <person name="Moya A."/>
        </authorList>
    </citation>
    <scope>NUCLEOTIDE SEQUENCE [LARGE SCALE GENOMIC DNA]</scope>
    <source>
        <strain>Bp</strain>
    </source>
</reference>
<keyword id="KW-0067">ATP-binding</keyword>
<keyword id="KW-0227">DNA damage</keyword>
<keyword id="KW-0234">DNA repair</keyword>
<keyword id="KW-0238">DNA-binding</keyword>
<keyword id="KW-0269">Exonuclease</keyword>
<keyword id="KW-0347">Helicase</keyword>
<keyword id="KW-0378">Hydrolase</keyword>
<keyword id="KW-0413">Isomerase</keyword>
<keyword id="KW-0460">Magnesium</keyword>
<keyword id="KW-0479">Metal-binding</keyword>
<keyword id="KW-0540">Nuclease</keyword>
<keyword id="KW-0547">Nucleotide-binding</keyword>
<keyword id="KW-1185">Reference proteome</keyword>
<name>RECB_BUCBP</name>
<proteinExistence type="inferred from homology"/>
<evidence type="ECO:0000255" key="1">
    <source>
        <dbReference type="HAMAP-Rule" id="MF_01485"/>
    </source>
</evidence>
<dbReference type="EC" id="3.1.11.5" evidence="1"/>
<dbReference type="EC" id="5.6.2.4" evidence="1"/>
<dbReference type="EMBL" id="AE016826">
    <property type="protein sequence ID" value="AAO27116.1"/>
    <property type="molecule type" value="Genomic_DNA"/>
</dbReference>
<dbReference type="RefSeq" id="WP_011091517.1">
    <property type="nucleotide sequence ID" value="NC_004545.1"/>
</dbReference>
<dbReference type="SMR" id="Q89AB3"/>
<dbReference type="STRING" id="224915.bbp_404"/>
<dbReference type="KEGG" id="bab:bbp_404"/>
<dbReference type="eggNOG" id="COG1074">
    <property type="taxonomic scope" value="Bacteria"/>
</dbReference>
<dbReference type="HOGENOM" id="CLU_001114_6_0_6"/>
<dbReference type="OrthoDB" id="9810135at2"/>
<dbReference type="Proteomes" id="UP000000601">
    <property type="component" value="Chromosome"/>
</dbReference>
<dbReference type="GO" id="GO:0005829">
    <property type="term" value="C:cytosol"/>
    <property type="evidence" value="ECO:0007669"/>
    <property type="project" value="TreeGrafter"/>
</dbReference>
<dbReference type="GO" id="GO:0009338">
    <property type="term" value="C:exodeoxyribonuclease V complex"/>
    <property type="evidence" value="ECO:0007669"/>
    <property type="project" value="TreeGrafter"/>
</dbReference>
<dbReference type="GO" id="GO:0043138">
    <property type="term" value="F:3'-5' DNA helicase activity"/>
    <property type="evidence" value="ECO:0007669"/>
    <property type="project" value="UniProtKB-UniRule"/>
</dbReference>
<dbReference type="GO" id="GO:0005524">
    <property type="term" value="F:ATP binding"/>
    <property type="evidence" value="ECO:0007669"/>
    <property type="project" value="UniProtKB-UniRule"/>
</dbReference>
<dbReference type="GO" id="GO:0016887">
    <property type="term" value="F:ATP hydrolysis activity"/>
    <property type="evidence" value="ECO:0007669"/>
    <property type="project" value="RHEA"/>
</dbReference>
<dbReference type="GO" id="GO:0003677">
    <property type="term" value="F:DNA binding"/>
    <property type="evidence" value="ECO:0007669"/>
    <property type="project" value="UniProtKB-UniRule"/>
</dbReference>
<dbReference type="GO" id="GO:0008854">
    <property type="term" value="F:exodeoxyribonuclease V activity"/>
    <property type="evidence" value="ECO:0007669"/>
    <property type="project" value="UniProtKB-EC"/>
</dbReference>
<dbReference type="GO" id="GO:0000287">
    <property type="term" value="F:magnesium ion binding"/>
    <property type="evidence" value="ECO:0007669"/>
    <property type="project" value="UniProtKB-UniRule"/>
</dbReference>
<dbReference type="GO" id="GO:0000724">
    <property type="term" value="P:double-strand break repair via homologous recombination"/>
    <property type="evidence" value="ECO:0007669"/>
    <property type="project" value="UniProtKB-UniRule"/>
</dbReference>
<dbReference type="CDD" id="cd22352">
    <property type="entry name" value="RecB_C-like"/>
    <property type="match status" value="1"/>
</dbReference>
<dbReference type="Gene3D" id="3.90.320.10">
    <property type="match status" value="1"/>
</dbReference>
<dbReference type="Gene3D" id="3.40.50.300">
    <property type="entry name" value="P-loop containing nucleotide triphosphate hydrolases"/>
    <property type="match status" value="2"/>
</dbReference>
<dbReference type="Gene3D" id="1.10.486.10">
    <property type="entry name" value="PCRA, domain 4"/>
    <property type="match status" value="1"/>
</dbReference>
<dbReference type="Gene3D" id="1.10.3170.10">
    <property type="entry name" value="Recbcd, chain B, domain 2"/>
    <property type="match status" value="1"/>
</dbReference>
<dbReference type="HAMAP" id="MF_01485">
    <property type="entry name" value="RecB"/>
    <property type="match status" value="1"/>
</dbReference>
<dbReference type="InterPro" id="IPR014017">
    <property type="entry name" value="DNA_helicase_UvrD-like_C"/>
</dbReference>
<dbReference type="InterPro" id="IPR000212">
    <property type="entry name" value="DNA_helicase_UvrD/REP"/>
</dbReference>
<dbReference type="InterPro" id="IPR027417">
    <property type="entry name" value="P-loop_NTPase"/>
</dbReference>
<dbReference type="InterPro" id="IPR011604">
    <property type="entry name" value="PDDEXK-like_dom_sf"/>
</dbReference>
<dbReference type="InterPro" id="IPR004586">
    <property type="entry name" value="RecB"/>
</dbReference>
<dbReference type="InterPro" id="IPR011335">
    <property type="entry name" value="Restrct_endonuc-II-like"/>
</dbReference>
<dbReference type="InterPro" id="IPR014016">
    <property type="entry name" value="UvrD-like_ATP-bd"/>
</dbReference>
<dbReference type="NCBIfam" id="TIGR00609">
    <property type="entry name" value="recB"/>
    <property type="match status" value="1"/>
</dbReference>
<dbReference type="PANTHER" id="PTHR11070:SF23">
    <property type="entry name" value="RECBCD ENZYME SUBUNIT RECB"/>
    <property type="match status" value="1"/>
</dbReference>
<dbReference type="PANTHER" id="PTHR11070">
    <property type="entry name" value="UVRD / RECB / PCRA DNA HELICASE FAMILY MEMBER"/>
    <property type="match status" value="1"/>
</dbReference>
<dbReference type="Pfam" id="PF00580">
    <property type="entry name" value="UvrD-helicase"/>
    <property type="match status" value="1"/>
</dbReference>
<dbReference type="Pfam" id="PF13361">
    <property type="entry name" value="UvrD_C"/>
    <property type="match status" value="2"/>
</dbReference>
<dbReference type="SUPFAM" id="SSF52540">
    <property type="entry name" value="P-loop containing nucleoside triphosphate hydrolases"/>
    <property type="match status" value="1"/>
</dbReference>
<dbReference type="SUPFAM" id="SSF52980">
    <property type="entry name" value="Restriction endonuclease-like"/>
    <property type="match status" value="1"/>
</dbReference>
<dbReference type="PROSITE" id="PS51198">
    <property type="entry name" value="UVRD_HELICASE_ATP_BIND"/>
    <property type="match status" value="1"/>
</dbReference>
<dbReference type="PROSITE" id="PS51217">
    <property type="entry name" value="UVRD_HELICASE_CTER"/>
    <property type="match status" value="1"/>
</dbReference>
<feature type="chain" id="PRO_0000102042" description="RecBCD enzyme subunit RecB">
    <location>
        <begin position="1"/>
        <end position="1180"/>
    </location>
</feature>
<feature type="domain" description="UvrD-like helicase ATP-binding" evidence="1">
    <location>
        <begin position="3"/>
        <end position="448"/>
    </location>
</feature>
<feature type="domain" description="UvrD-like helicase C-terminal" evidence="1">
    <location>
        <begin position="478"/>
        <end position="745"/>
    </location>
</feature>
<feature type="region of interest" description="DNA-binding and helicase activity, interacts with RecC" evidence="1">
    <location>
        <begin position="1"/>
        <end position="852"/>
    </location>
</feature>
<feature type="region of interest" description="Nuclease activity, interacts with RecD and RecA" evidence="1">
    <location>
        <begin position="905"/>
        <end position="1180"/>
    </location>
</feature>
<feature type="active site" description="For nuclease activity" evidence="1">
    <location>
        <position position="1088"/>
    </location>
</feature>
<feature type="binding site" evidence="1">
    <location>
        <begin position="24"/>
        <end position="31"/>
    </location>
    <ligand>
        <name>ATP</name>
        <dbReference type="ChEBI" id="CHEBI:30616"/>
    </ligand>
</feature>
<feature type="binding site" evidence="1">
    <location>
        <position position="964"/>
    </location>
    <ligand>
        <name>Mg(2+)</name>
        <dbReference type="ChEBI" id="CHEBI:18420"/>
    </ligand>
</feature>
<feature type="binding site" evidence="1">
    <location>
        <position position="1075"/>
    </location>
    <ligand>
        <name>Mg(2+)</name>
        <dbReference type="ChEBI" id="CHEBI:18420"/>
    </ligand>
</feature>
<feature type="binding site" evidence="1">
    <location>
        <position position="1088"/>
    </location>
    <ligand>
        <name>Mg(2+)</name>
        <dbReference type="ChEBI" id="CHEBI:18420"/>
    </ligand>
</feature>
<organism>
    <name type="scientific">Buchnera aphidicola subsp. Baizongia pistaciae (strain Bp)</name>
    <dbReference type="NCBI Taxonomy" id="224915"/>
    <lineage>
        <taxon>Bacteria</taxon>
        <taxon>Pseudomonadati</taxon>
        <taxon>Pseudomonadota</taxon>
        <taxon>Gammaproteobacteria</taxon>
        <taxon>Enterobacterales</taxon>
        <taxon>Erwiniaceae</taxon>
        <taxon>Buchnera</taxon>
    </lineage>
</organism>
<protein>
    <recommendedName>
        <fullName evidence="1">RecBCD enzyme subunit RecB</fullName>
        <ecNumber evidence="1">3.1.11.5</ecNumber>
        <ecNumber evidence="1">5.6.2.4</ecNumber>
    </recommendedName>
    <alternativeName>
        <fullName evidence="1">DNA 3'-5' helicase subunit RecB</fullName>
    </alternativeName>
    <alternativeName>
        <fullName evidence="1">Exonuclease V subunit RecB</fullName>
        <shortName evidence="1">ExoV subunit RecB</shortName>
    </alternativeName>
    <alternativeName>
        <fullName evidence="1">Helicase/nuclease RecBCD subunit RecB</fullName>
    </alternativeName>
</protein>
<accession>Q89AB3</accession>
<sequence>MITTIPKSINVTTIPLSGKILIEASAGTGKTFSLTILYIRLLLGITNHVKYKKGLLIKEILVVTFTEHTRAELEIRIKTYIKIFKTACIKKYSNNYVLSKLLSKITDFPKTIDILSKAENSIHELSIYTIHGFCYKILKLNKFNSELMLQNKILKHTYPLYLKISIKFWKYYFAFLSLDITSILLEYFNNPKTLLKEILPLLNKTQLISKLTKTKRKNIVQEYYILIKKIKLFKQKWANYSHLIHSEIIKTNVNKRIYTKSNLKRWINNITAWATQKQTKNFFIPSELKYFRYSFIIKKTTSEKILDDKFFKFIDTFLDSKFSLKEIFIIDASLEIKAMFMQEKIKNRYFEYDDLITFCWNMVNKNNFNISQTILKKYPVALIDEFQDTNNKQYNIFKKIYKKENLLILISDPKQAIYSFSGADITSYLQAKSNIKNQYFLDTNWRSSPKIINSINLLFSRLKNPFLTKNITFYPVKSSRINKTTKFEVNGKNQPALRFLLNKNKNISINEYKEWISITTAKYISYWISSGIKGNATITISNKVRTVNFSDIAIIVRNNLEAKTIQLELTKLNIQSLYLTSKNNIFQSKEILEILWILQAILNPNIERLLKRAMSTNIMSKNTKEIISIPNNHSYWIKLSQEFNQYLIFWNNYGILYVIQQLIINYNISNNNNLLHNFSPNIKNILYIGELLEEKSITIKNKFLLINWLKKNITQDFYLTKPKYIKPNYEKNNYIKIVSIHKSKGLEYPITIIPFATITFNKTVSTVEKICFNLNNTKIKKQKTLKIEKHKFSEDIRLLYVALTRSIIHCSIGISLAQTITQKKKIQKEKSKFKINVLRYIIQSGKNHISTKKLYTELSILKKNKNIEIISEIPNIIKKNFQIPTLNTNSQSLMHYQVSRKFNYNYNFTSYSQLKKNIKPSTMYSTLNTKKLFELNVKKKHCFENKILTPHTFPSGKIYGTLLHKILKNISFHKSINSNWLLKKLSEYNLDKRWCLILKNWMYSILYKNLDKNYNLRLSKLDSKNYIKELKFLLPIKKKLTALKLNNIFQTHQCSSLENKLCFHPIQGILSGSIDLVFLWKTKYFLVDYKSNWIGNSNQSYSQQNIKKIIKKHHYNFQLQLYSLVLHRYLKQHIKNYSFYNHFGGTYILFIRSINEIPSQNGIFYSIPNIEIIKKLEQIF</sequence>